<comment type="function">
    <text evidence="2">Catalyzes the cleavage of serine to glycine accompanied with the production of 5,10-methylenetetrahydrofolate, an essential intermediate for purine biosynthesis. Serine provides the major source of folate one-carbon in cells by catalyzing the transfer of one carbon from serine to tetrahydrofolate. Contributes to the de novo mitochondrial thymidylate biosynthesis pathway via its role in glycine and tetrahydrofolate metabolism: thymidylate biosynthesis is required to prevent uracil accumulation in mtDNA. Also required for mitochondrial translation by producing 5,10-methylenetetrahydrofolate; 5,10-methylenetetrahydrofolate providing methyl donors to produce the taurinomethyluridine base at the wobble position of some mitochondrial tRNAs. Associates with mitochondrial DNA. In addition to its role in mitochondria, also plays a role in the deubiquitination of target proteins as component of the BRISC complex: required for IFNAR1 deubiquitination by the BRISC complex.</text>
</comment>
<comment type="catalytic activity">
    <reaction evidence="2">
        <text>(6R)-5,10-methylene-5,6,7,8-tetrahydrofolate + glycine + H2O = (6S)-5,6,7,8-tetrahydrofolate + L-serine</text>
        <dbReference type="Rhea" id="RHEA:15481"/>
        <dbReference type="ChEBI" id="CHEBI:15377"/>
        <dbReference type="ChEBI" id="CHEBI:15636"/>
        <dbReference type="ChEBI" id="CHEBI:33384"/>
        <dbReference type="ChEBI" id="CHEBI:57305"/>
        <dbReference type="ChEBI" id="CHEBI:57453"/>
        <dbReference type="EC" id="2.1.2.1"/>
    </reaction>
    <physiologicalReaction direction="right-to-left" evidence="2">
        <dbReference type="Rhea" id="RHEA:15483"/>
    </physiologicalReaction>
</comment>
<comment type="cofactor">
    <cofactor evidence="2">
        <name>pyridoxal 5'-phosphate</name>
        <dbReference type="ChEBI" id="CHEBI:597326"/>
    </cofactor>
</comment>
<comment type="activity regulation">
    <text evidence="2">Hydroxymethyltransferase is inhibited by succinylation at Lys-280.</text>
</comment>
<comment type="pathway">
    <text evidence="2">One-carbon metabolism; tetrahydrofolate interconversion.</text>
</comment>
<comment type="subunit">
    <text evidence="2">Homotetramer; in the presence of bound pyridoxal 5'-phosphate. Homodimer; in the absence of bound pyridoxal 5'-phosphate. Pyridoxal 5'-phosphate binding mediates an important conformation change that is required for tetramerization. Interacts with ABRAXAS2; the interaction is direct. Identified in a complex with ABRAXAS2 and the other subunits of the BRISC complex, at least composed of the ABRAXAS2, BRCC3/BRCC36, BABAM2 and BABAM1/NBA1. Identified in a complex with ABRAXAS2 and IFNAR1. Interacts with KIRREL3.</text>
</comment>
<comment type="subcellular location">
    <subcellularLocation>
        <location evidence="2">Mitochondrion</location>
    </subcellularLocation>
    <subcellularLocation>
        <location evidence="2">Mitochondrion matrix</location>
        <location evidence="2">Mitochondrion nucleoid</location>
    </subcellularLocation>
    <subcellularLocation>
        <location evidence="2">Mitochondrion inner membrane</location>
    </subcellularLocation>
    <subcellularLocation>
        <location evidence="2">Cytoplasm</location>
    </subcellularLocation>
    <subcellularLocation>
        <location evidence="2">Nucleus</location>
    </subcellularLocation>
    <text evidence="2">Mainly localizes in the mitochondrion. Also found in the cytoplasm and nucleus as part of the BRISC complex.</text>
</comment>
<comment type="PTM">
    <text evidence="2">Succinylation at Lys-280 inhibits the hydroxymethyltransferase activity. Desuccinylation by SIRT5 restores the activity, leading to promote cell proliferation.</text>
</comment>
<comment type="miscellaneous">
    <text evidence="2">In eukaryotes there are two forms of the enzymes: a cytosolic one and a mitochondrial one.</text>
</comment>
<comment type="similarity">
    <text evidence="3">Belongs to the SHMT family.</text>
</comment>
<name>GLYM_BOVIN</name>
<dbReference type="EC" id="2.1.2.1" evidence="2"/>
<dbReference type="EMBL" id="BC103242">
    <property type="protein sequence ID" value="AAI03243.1"/>
    <property type="molecule type" value="mRNA"/>
</dbReference>
<dbReference type="RefSeq" id="NP_001029454.1">
    <property type="nucleotide sequence ID" value="NM_001034282.1"/>
</dbReference>
<dbReference type="SMR" id="Q3SZ20"/>
<dbReference type="FunCoup" id="Q3SZ20">
    <property type="interactions" value="2226"/>
</dbReference>
<dbReference type="STRING" id="9913.ENSBTAP00000038059"/>
<dbReference type="PaxDb" id="9913-ENSBTAP00000038059"/>
<dbReference type="PeptideAtlas" id="Q3SZ20"/>
<dbReference type="GeneID" id="507197"/>
<dbReference type="KEGG" id="bta:507197"/>
<dbReference type="CTD" id="6472"/>
<dbReference type="VEuPathDB" id="HostDB:ENSBTAG00000031500"/>
<dbReference type="eggNOG" id="KOG2467">
    <property type="taxonomic scope" value="Eukaryota"/>
</dbReference>
<dbReference type="HOGENOM" id="CLU_022477_0_1_1"/>
<dbReference type="InParanoid" id="Q3SZ20"/>
<dbReference type="OMA" id="TQPFFSQ"/>
<dbReference type="OrthoDB" id="10265628at2759"/>
<dbReference type="TreeFam" id="TF314667"/>
<dbReference type="Reactome" id="R-BTA-196757">
    <property type="pathway name" value="Metabolism of folate and pterines"/>
</dbReference>
<dbReference type="Reactome" id="R-BTA-9013408">
    <property type="pathway name" value="RHOG GTPase cycle"/>
</dbReference>
<dbReference type="Reactome" id="R-BTA-9837999">
    <property type="pathway name" value="Mitochondrial protein degradation"/>
</dbReference>
<dbReference type="UniPathway" id="UPA00193"/>
<dbReference type="Proteomes" id="UP000009136">
    <property type="component" value="Chromosome 5"/>
</dbReference>
<dbReference type="Bgee" id="ENSBTAG00000031500">
    <property type="expression patterns" value="Expressed in placenta and 107 other cell types or tissues"/>
</dbReference>
<dbReference type="GO" id="GO:0070552">
    <property type="term" value="C:BRISC complex"/>
    <property type="evidence" value="ECO:0000250"/>
    <property type="project" value="UniProtKB"/>
</dbReference>
<dbReference type="GO" id="GO:0005737">
    <property type="term" value="C:cytoplasm"/>
    <property type="evidence" value="ECO:0000250"/>
    <property type="project" value="UniProtKB"/>
</dbReference>
<dbReference type="GO" id="GO:0005743">
    <property type="term" value="C:mitochondrial inner membrane"/>
    <property type="evidence" value="ECO:0000250"/>
    <property type="project" value="UniProtKB"/>
</dbReference>
<dbReference type="GO" id="GO:0005759">
    <property type="term" value="C:mitochondrial matrix"/>
    <property type="evidence" value="ECO:0000250"/>
    <property type="project" value="UniProtKB"/>
</dbReference>
<dbReference type="GO" id="GO:0042645">
    <property type="term" value="C:mitochondrial nucleoid"/>
    <property type="evidence" value="ECO:0000250"/>
    <property type="project" value="UniProtKB"/>
</dbReference>
<dbReference type="GO" id="GO:0005739">
    <property type="term" value="C:mitochondrion"/>
    <property type="evidence" value="ECO:0000250"/>
    <property type="project" value="UniProtKB"/>
</dbReference>
<dbReference type="GO" id="GO:0005634">
    <property type="term" value="C:nucleus"/>
    <property type="evidence" value="ECO:0000250"/>
    <property type="project" value="UniProtKB"/>
</dbReference>
<dbReference type="GO" id="GO:0003682">
    <property type="term" value="F:chromatin binding"/>
    <property type="evidence" value="ECO:0000250"/>
    <property type="project" value="UniProtKB"/>
</dbReference>
<dbReference type="GO" id="GO:0004372">
    <property type="term" value="F:glycine hydroxymethyltransferase activity"/>
    <property type="evidence" value="ECO:0000250"/>
    <property type="project" value="UniProtKB"/>
</dbReference>
<dbReference type="GO" id="GO:0030170">
    <property type="term" value="F:pyridoxal phosphate binding"/>
    <property type="evidence" value="ECO:0000250"/>
    <property type="project" value="UniProtKB"/>
</dbReference>
<dbReference type="GO" id="GO:0019264">
    <property type="term" value="P:glycine biosynthetic process from serine"/>
    <property type="evidence" value="ECO:0000318"/>
    <property type="project" value="GO_Central"/>
</dbReference>
<dbReference type="GO" id="GO:0006544">
    <property type="term" value="P:glycine metabolic process"/>
    <property type="evidence" value="ECO:0000250"/>
    <property type="project" value="UniProtKB"/>
</dbReference>
<dbReference type="GO" id="GO:0006563">
    <property type="term" value="P:L-serine metabolic process"/>
    <property type="evidence" value="ECO:0000250"/>
    <property type="project" value="UniProtKB"/>
</dbReference>
<dbReference type="GO" id="GO:0006730">
    <property type="term" value="P:one-carbon metabolic process"/>
    <property type="evidence" value="ECO:0000250"/>
    <property type="project" value="UniProtKB"/>
</dbReference>
<dbReference type="GO" id="GO:0051289">
    <property type="term" value="P:protein homotetramerization"/>
    <property type="evidence" value="ECO:0000250"/>
    <property type="project" value="UniProtKB"/>
</dbReference>
<dbReference type="GO" id="GO:0070536">
    <property type="term" value="P:protein K63-linked deubiquitination"/>
    <property type="evidence" value="ECO:0000250"/>
    <property type="project" value="UniProtKB"/>
</dbReference>
<dbReference type="GO" id="GO:0051262">
    <property type="term" value="P:protein tetramerization"/>
    <property type="evidence" value="ECO:0000250"/>
    <property type="project" value="UniProtKB"/>
</dbReference>
<dbReference type="GO" id="GO:1903715">
    <property type="term" value="P:regulation of aerobic respiration"/>
    <property type="evidence" value="ECO:0000250"/>
    <property type="project" value="UniProtKB"/>
</dbReference>
<dbReference type="GO" id="GO:0070129">
    <property type="term" value="P:regulation of mitochondrial translation"/>
    <property type="evidence" value="ECO:0000250"/>
    <property type="project" value="UniProtKB"/>
</dbReference>
<dbReference type="GO" id="GO:0002082">
    <property type="term" value="P:regulation of oxidative phosphorylation"/>
    <property type="evidence" value="ECO:0000250"/>
    <property type="project" value="UniProtKB"/>
</dbReference>
<dbReference type="GO" id="GO:0034340">
    <property type="term" value="P:response to type I interferon"/>
    <property type="evidence" value="ECO:0000250"/>
    <property type="project" value="UniProtKB"/>
</dbReference>
<dbReference type="GO" id="GO:0035999">
    <property type="term" value="P:tetrahydrofolate interconversion"/>
    <property type="evidence" value="ECO:0007669"/>
    <property type="project" value="UniProtKB-UniPathway"/>
</dbReference>
<dbReference type="GO" id="GO:0046653">
    <property type="term" value="P:tetrahydrofolate metabolic process"/>
    <property type="evidence" value="ECO:0000250"/>
    <property type="project" value="UniProtKB"/>
</dbReference>
<dbReference type="CDD" id="cd00378">
    <property type="entry name" value="SHMT"/>
    <property type="match status" value="1"/>
</dbReference>
<dbReference type="FunFam" id="3.40.640.10:FF:000097">
    <property type="entry name" value="Serine hydroxymethyltransferase"/>
    <property type="match status" value="1"/>
</dbReference>
<dbReference type="FunFam" id="3.90.1150.10:FF:000005">
    <property type="entry name" value="Serine hydroxymethyltransferase"/>
    <property type="match status" value="1"/>
</dbReference>
<dbReference type="FunFam" id="3.90.1150.10:FF:000048">
    <property type="entry name" value="Serine hydroxymethyltransferase, mitochondrial"/>
    <property type="match status" value="1"/>
</dbReference>
<dbReference type="Gene3D" id="3.90.1150.10">
    <property type="entry name" value="Aspartate Aminotransferase, domain 1"/>
    <property type="match status" value="1"/>
</dbReference>
<dbReference type="Gene3D" id="3.40.640.10">
    <property type="entry name" value="Type I PLP-dependent aspartate aminotransferase-like (Major domain)"/>
    <property type="match status" value="1"/>
</dbReference>
<dbReference type="HAMAP" id="MF_00051">
    <property type="entry name" value="SHMT"/>
    <property type="match status" value="1"/>
</dbReference>
<dbReference type="InterPro" id="IPR015424">
    <property type="entry name" value="PyrdxlP-dep_Trfase"/>
</dbReference>
<dbReference type="InterPro" id="IPR015421">
    <property type="entry name" value="PyrdxlP-dep_Trfase_major"/>
</dbReference>
<dbReference type="InterPro" id="IPR015422">
    <property type="entry name" value="PyrdxlP-dep_Trfase_small"/>
</dbReference>
<dbReference type="InterPro" id="IPR001085">
    <property type="entry name" value="Ser_HO-MeTrfase"/>
</dbReference>
<dbReference type="InterPro" id="IPR049943">
    <property type="entry name" value="Ser_HO-MeTrfase-like"/>
</dbReference>
<dbReference type="InterPro" id="IPR019798">
    <property type="entry name" value="Ser_HO-MeTrfase_PLP_BS"/>
</dbReference>
<dbReference type="InterPro" id="IPR039429">
    <property type="entry name" value="SHMT-like_dom"/>
</dbReference>
<dbReference type="NCBIfam" id="NF000586">
    <property type="entry name" value="PRK00011.1"/>
    <property type="match status" value="1"/>
</dbReference>
<dbReference type="PANTHER" id="PTHR11680">
    <property type="entry name" value="SERINE HYDROXYMETHYLTRANSFERASE"/>
    <property type="match status" value="1"/>
</dbReference>
<dbReference type="PANTHER" id="PTHR11680:SF28">
    <property type="entry name" value="SERINE HYDROXYMETHYLTRANSFERASE, MITOCHONDRIAL"/>
    <property type="match status" value="1"/>
</dbReference>
<dbReference type="Pfam" id="PF00464">
    <property type="entry name" value="SHMT"/>
    <property type="match status" value="1"/>
</dbReference>
<dbReference type="PIRSF" id="PIRSF000412">
    <property type="entry name" value="SHMT"/>
    <property type="match status" value="1"/>
</dbReference>
<dbReference type="SUPFAM" id="SSF53383">
    <property type="entry name" value="PLP-dependent transferases"/>
    <property type="match status" value="1"/>
</dbReference>
<dbReference type="PROSITE" id="PS00096">
    <property type="entry name" value="SHMT"/>
    <property type="match status" value="1"/>
</dbReference>
<proteinExistence type="evidence at transcript level"/>
<reference key="1">
    <citation type="submission" date="2005-08" db="EMBL/GenBank/DDBJ databases">
        <authorList>
            <consortium name="NIH - Mammalian Gene Collection (MGC) project"/>
        </authorList>
    </citation>
    <scope>NUCLEOTIDE SEQUENCE [LARGE SCALE MRNA]</scope>
    <source>
        <strain>Hereford</strain>
        <tissue>Thymus</tissue>
    </source>
</reference>
<evidence type="ECO:0000250" key="1">
    <source>
        <dbReference type="UniProtKB" id="P14519"/>
    </source>
</evidence>
<evidence type="ECO:0000250" key="2">
    <source>
        <dbReference type="UniProtKB" id="P34897"/>
    </source>
</evidence>
<evidence type="ECO:0000305" key="3"/>
<protein>
    <recommendedName>
        <fullName>Serine hydroxymethyltransferase, mitochondrial</fullName>
        <shortName>SHMT</shortName>
        <ecNumber evidence="2">2.1.2.1</ecNumber>
    </recommendedName>
    <alternativeName>
        <fullName>Glycine hydroxymethyltransferase</fullName>
    </alternativeName>
    <alternativeName>
        <fullName>Serine methylase</fullName>
    </alternativeName>
</protein>
<keyword id="KW-0007">Acetylation</keyword>
<keyword id="KW-0963">Cytoplasm</keyword>
<keyword id="KW-0472">Membrane</keyword>
<keyword id="KW-0496">Mitochondrion</keyword>
<keyword id="KW-0999">Mitochondrion inner membrane</keyword>
<keyword id="KW-1135">Mitochondrion nucleoid</keyword>
<keyword id="KW-0539">Nucleus</keyword>
<keyword id="KW-0554">One-carbon metabolism</keyword>
<keyword id="KW-0597">Phosphoprotein</keyword>
<keyword id="KW-0663">Pyridoxal phosphate</keyword>
<keyword id="KW-1185">Reference proteome</keyword>
<keyword id="KW-0808">Transferase</keyword>
<keyword id="KW-0809">Transit peptide</keyword>
<feature type="transit peptide" description="Mitochondrion" evidence="1">
    <location>
        <begin position="1"/>
        <end position="29"/>
    </location>
</feature>
<feature type="chain" id="PRO_0000239655" description="Serine hydroxymethyltransferase, mitochondrial">
    <location>
        <begin position="30"/>
        <end position="504"/>
    </location>
</feature>
<feature type="modified residue" description="N6-acetyllysine" evidence="2">
    <location>
        <position position="103"/>
    </location>
</feature>
<feature type="modified residue" description="N6-acetyllysine" evidence="2">
    <location>
        <position position="181"/>
    </location>
</feature>
<feature type="modified residue" description="N6-acetyllysine" evidence="2">
    <location>
        <position position="196"/>
    </location>
</feature>
<feature type="modified residue" description="N6-(pyridoxal phosphate)lysine; alternate" evidence="2">
    <location>
        <position position="280"/>
    </location>
</feature>
<feature type="modified residue" description="N6-succinyllysine; alternate" evidence="2">
    <location>
        <position position="280"/>
    </location>
</feature>
<feature type="modified residue" description="N6-acetyllysine" evidence="2">
    <location>
        <position position="356"/>
    </location>
</feature>
<feature type="modified residue" description="N6-acetyllysine" evidence="2">
    <location>
        <position position="464"/>
    </location>
</feature>
<feature type="modified residue" description="N6-acetyllysine" evidence="2">
    <location>
        <position position="469"/>
    </location>
</feature>
<feature type="modified residue" description="Phosphoserine" evidence="2">
    <location>
        <position position="470"/>
    </location>
</feature>
<feature type="modified residue" description="N6-acetyllysine" evidence="2">
    <location>
        <position position="474"/>
    </location>
</feature>
<gene>
    <name type="primary">SHMT2</name>
</gene>
<accession>Q3SZ20</accession>
<organism>
    <name type="scientific">Bos taurus</name>
    <name type="common">Bovine</name>
    <dbReference type="NCBI Taxonomy" id="9913"/>
    <lineage>
        <taxon>Eukaryota</taxon>
        <taxon>Metazoa</taxon>
        <taxon>Chordata</taxon>
        <taxon>Craniata</taxon>
        <taxon>Vertebrata</taxon>
        <taxon>Euteleostomi</taxon>
        <taxon>Mammalia</taxon>
        <taxon>Eutheria</taxon>
        <taxon>Laurasiatheria</taxon>
        <taxon>Artiodactyla</taxon>
        <taxon>Ruminantia</taxon>
        <taxon>Pecora</taxon>
        <taxon>Bovidae</taxon>
        <taxon>Bovinae</taxon>
        <taxon>Bos</taxon>
    </lineage>
</organism>
<sequence>MLSFSFIWATRPLRRCGQLVGMAVRCQHSEAAQTQTGEASKGWSGQESLSDSDPEMWELLRREKDRQCRGLELIASENFCSRAALEALGSCLNNKYSEGYPGKRYYGGAEVVDEIELLCQRRALEAFDLDPAQWGVNVQPYSGSPANLAAYTALLQPHDRIMGLDLPDGGHLTHGYMSDVKRISATSIFFESMPYKLNPQTGLIDYDQLALTARLFKPRLIIAGTSAYARLIDYARMREVCDEVKAHLLADMAHISGLVAAKVIPSPFKHADIVTTTTHKTLRGARSGLIFYRKGVQAVDPKTGREIPYTFEDRINFAVFPSLQGGPHNHAIAAVAVALKQACTPMFREYSLQILKNAQAMANALLERGYSLVSGGTDNHLVLVDLRPKGLDGARAERVLELVSITANKNTCPGDRSAITPGGLRLGAPALTSRGFLEDDFRKVVGFIDEGVNIGLEVKSKTTKLQDFKSFLLKDPETSHQLADLRQRVEQFARAFPMPGFDDH</sequence>